<accession>Q0I5B0</accession>
<dbReference type="EMBL" id="CP000436">
    <property type="protein sequence ID" value="ABI25840.1"/>
    <property type="molecule type" value="Genomic_DNA"/>
</dbReference>
<dbReference type="SMR" id="Q0I5B0"/>
<dbReference type="KEGG" id="hso:HS_1572"/>
<dbReference type="eggNOG" id="COG0425">
    <property type="taxonomic scope" value="Bacteria"/>
</dbReference>
<dbReference type="HOGENOM" id="CLU_165255_5_0_6"/>
<dbReference type="GO" id="GO:0005737">
    <property type="term" value="C:cytoplasm"/>
    <property type="evidence" value="ECO:0007669"/>
    <property type="project" value="UniProtKB-SubCell"/>
</dbReference>
<dbReference type="GO" id="GO:0097163">
    <property type="term" value="F:sulfur carrier activity"/>
    <property type="evidence" value="ECO:0007669"/>
    <property type="project" value="UniProtKB-UniRule"/>
</dbReference>
<dbReference type="GO" id="GO:0002143">
    <property type="term" value="P:tRNA wobble position uridine thiolation"/>
    <property type="evidence" value="ECO:0007669"/>
    <property type="project" value="InterPro"/>
</dbReference>
<dbReference type="CDD" id="cd03423">
    <property type="entry name" value="SirA"/>
    <property type="match status" value="1"/>
</dbReference>
<dbReference type="Gene3D" id="3.30.110.40">
    <property type="entry name" value="TusA-like domain"/>
    <property type="match status" value="1"/>
</dbReference>
<dbReference type="HAMAP" id="MF_00413">
    <property type="entry name" value="Thiourid_synth_A"/>
    <property type="match status" value="1"/>
</dbReference>
<dbReference type="InterPro" id="IPR022931">
    <property type="entry name" value="Sulphur_carrier_TusA"/>
</dbReference>
<dbReference type="InterPro" id="IPR001455">
    <property type="entry name" value="TusA-like"/>
</dbReference>
<dbReference type="InterPro" id="IPR036868">
    <property type="entry name" value="TusA-like_sf"/>
</dbReference>
<dbReference type="NCBIfam" id="NF001423">
    <property type="entry name" value="PRK00299.1"/>
    <property type="match status" value="1"/>
</dbReference>
<dbReference type="PANTHER" id="PTHR33279:SF2">
    <property type="entry name" value="SULFUR CARRIER PROTEIN TUSA"/>
    <property type="match status" value="1"/>
</dbReference>
<dbReference type="PANTHER" id="PTHR33279">
    <property type="entry name" value="SULFUR CARRIER PROTEIN YEDF-RELATED"/>
    <property type="match status" value="1"/>
</dbReference>
<dbReference type="Pfam" id="PF01206">
    <property type="entry name" value="TusA"/>
    <property type="match status" value="1"/>
</dbReference>
<dbReference type="SUPFAM" id="SSF64307">
    <property type="entry name" value="SirA-like"/>
    <property type="match status" value="1"/>
</dbReference>
<dbReference type="PROSITE" id="PS01148">
    <property type="entry name" value="UPF0033"/>
    <property type="match status" value="1"/>
</dbReference>
<organism>
    <name type="scientific">Histophilus somni (strain 129Pt)</name>
    <name type="common">Haemophilus somnus</name>
    <dbReference type="NCBI Taxonomy" id="205914"/>
    <lineage>
        <taxon>Bacteria</taxon>
        <taxon>Pseudomonadati</taxon>
        <taxon>Pseudomonadota</taxon>
        <taxon>Gammaproteobacteria</taxon>
        <taxon>Pasteurellales</taxon>
        <taxon>Pasteurellaceae</taxon>
        <taxon>Histophilus</taxon>
    </lineage>
</organism>
<keyword id="KW-0963">Cytoplasm</keyword>
<sequence length="79" mass="9188">MTDIIVTQTLNTIGLRCPEPIMLLRKKIRHMQEGETLLILADDPATTRDIPSFCQFMDHNLLKSDLENTPFKYWIKKGK</sequence>
<reference key="1">
    <citation type="journal article" date="2007" name="J. Bacteriol.">
        <title>Complete genome sequence of Haemophilus somnus (Histophilus somni) strain 129Pt and comparison to Haemophilus ducreyi 35000HP and Haemophilus influenzae Rd.</title>
        <authorList>
            <person name="Challacombe J.F."/>
            <person name="Duncan A.J."/>
            <person name="Brettin T.S."/>
            <person name="Bruce D."/>
            <person name="Chertkov O."/>
            <person name="Detter J.C."/>
            <person name="Han C.S."/>
            <person name="Misra M."/>
            <person name="Richardson P."/>
            <person name="Tapia R."/>
            <person name="Thayer N."/>
            <person name="Xie G."/>
            <person name="Inzana T.J."/>
        </authorList>
    </citation>
    <scope>NUCLEOTIDE SEQUENCE [LARGE SCALE GENOMIC DNA]</scope>
    <source>
        <strain>129Pt</strain>
    </source>
</reference>
<comment type="function">
    <text evidence="1">Sulfur carrier protein which probably makes part of a sulfur-relay system.</text>
</comment>
<comment type="subcellular location">
    <subcellularLocation>
        <location evidence="1">Cytoplasm</location>
    </subcellularLocation>
</comment>
<comment type="similarity">
    <text evidence="1">Belongs to the sulfur carrier protein TusA family.</text>
</comment>
<name>TUSA_HISS1</name>
<gene>
    <name evidence="1" type="primary">tusA</name>
    <name type="ordered locus">HS_1572</name>
</gene>
<proteinExistence type="inferred from homology"/>
<feature type="chain" id="PRO_1000050016" description="Sulfur carrier protein TusA">
    <location>
        <begin position="1"/>
        <end position="79"/>
    </location>
</feature>
<feature type="active site" description="Cysteine persulfide intermediate" evidence="1">
    <location>
        <position position="17"/>
    </location>
</feature>
<evidence type="ECO:0000255" key="1">
    <source>
        <dbReference type="HAMAP-Rule" id="MF_00413"/>
    </source>
</evidence>
<protein>
    <recommendedName>
        <fullName evidence="1">Sulfur carrier protein TusA</fullName>
    </recommendedName>
</protein>